<dbReference type="EMBL" id="AJ305226">
    <property type="protein sequence ID" value="CAC37794.1"/>
    <property type="molecule type" value="mRNA"/>
</dbReference>
<dbReference type="EMBL" id="AJ305227">
    <property type="protein sequence ID" value="CAC37795.1"/>
    <property type="molecule type" value="mRNA"/>
</dbReference>
<dbReference type="EMBL" id="AL136564">
    <property type="protein sequence ID" value="CAB66499.2"/>
    <property type="molecule type" value="mRNA"/>
</dbReference>
<dbReference type="EMBL" id="AK074091">
    <property type="protein sequence ID" value="BAB84917.1"/>
    <property type="status" value="ALT_SEQ"/>
    <property type="molecule type" value="mRNA"/>
</dbReference>
<dbReference type="EMBL" id="AK097052">
    <property type="protein sequence ID" value="BAC04936.1"/>
    <property type="status" value="ALT_SEQ"/>
    <property type="molecule type" value="mRNA"/>
</dbReference>
<dbReference type="EMBL" id="CR456482">
    <property type="protein sequence ID" value="CAG30368.1"/>
    <property type="molecule type" value="mRNA"/>
</dbReference>
<dbReference type="EMBL" id="AL035658">
    <property type="status" value="NOT_ANNOTATED_CDS"/>
    <property type="molecule type" value="Genomic_DNA"/>
</dbReference>
<dbReference type="EMBL" id="AL035681">
    <property type="status" value="NOT_ANNOTATED_CDS"/>
    <property type="molecule type" value="Genomic_DNA"/>
</dbReference>
<dbReference type="EMBL" id="BC017191">
    <property type="protein sequence ID" value="AAH17191.1"/>
    <property type="molecule type" value="mRNA"/>
</dbReference>
<dbReference type="CCDS" id="CCDS14011.1">
    <molecule id="Q969R5-1"/>
</dbReference>
<dbReference type="RefSeq" id="NP_113676.2">
    <molecule id="Q969R5-1"/>
    <property type="nucleotide sequence ID" value="NM_031488.4"/>
</dbReference>
<dbReference type="PDB" id="2W0T">
    <property type="method" value="NMR"/>
    <property type="chains" value="A=82-124"/>
</dbReference>
<dbReference type="PDB" id="3CEY">
    <property type="method" value="X-ray"/>
    <property type="resolution" value="2.20 A"/>
    <property type="chains" value="A/B=170-625"/>
</dbReference>
<dbReference type="PDB" id="3F70">
    <property type="method" value="X-ray"/>
    <property type="resolution" value="2.10 A"/>
    <property type="chains" value="A/B=170-625"/>
</dbReference>
<dbReference type="PDBsum" id="2W0T"/>
<dbReference type="PDBsum" id="3CEY"/>
<dbReference type="PDBsum" id="3F70"/>
<dbReference type="SMR" id="Q969R5"/>
<dbReference type="BioGRID" id="123753">
    <property type="interactions" value="214"/>
</dbReference>
<dbReference type="ComplexPortal" id="CPX-2305">
    <property type="entry name" value="Non-canonical polycomb repressive complex 1.6, RING1-RYBP variant"/>
</dbReference>
<dbReference type="ComplexPortal" id="CPX-2550">
    <property type="entry name" value="Non-canonical polycomb repressive complex 1.6, RING1-YAF2 variant"/>
</dbReference>
<dbReference type="ComplexPortal" id="CPX-2555">
    <property type="entry name" value="Non-canonical polycomb repressive complex 1.6, RING2-RYBP variant"/>
</dbReference>
<dbReference type="ComplexPortal" id="CPX-2557">
    <property type="entry name" value="Non-canonical polycomb repressive complex 1.6, RING2-YAF2 variant"/>
</dbReference>
<dbReference type="CORUM" id="Q969R5"/>
<dbReference type="DIP" id="DIP-56748N"/>
<dbReference type="FunCoup" id="Q969R5">
    <property type="interactions" value="3538"/>
</dbReference>
<dbReference type="IntAct" id="Q969R5">
    <property type="interactions" value="167"/>
</dbReference>
<dbReference type="MINT" id="Q969R5"/>
<dbReference type="STRING" id="9606.ENSP00000216237"/>
<dbReference type="GlyGen" id="Q969R5">
    <property type="glycosylation" value="1 site, 1 O-linked glycan (1 site)"/>
</dbReference>
<dbReference type="iPTMnet" id="Q969R5"/>
<dbReference type="PhosphoSitePlus" id="Q969R5"/>
<dbReference type="BioMuta" id="L3MBTL2"/>
<dbReference type="DMDM" id="27734418"/>
<dbReference type="jPOST" id="Q969R5"/>
<dbReference type="MassIVE" id="Q969R5"/>
<dbReference type="PaxDb" id="9606-ENSP00000216237"/>
<dbReference type="PeptideAtlas" id="Q969R5"/>
<dbReference type="ProteomicsDB" id="75820">
    <molecule id="Q969R5-1"/>
</dbReference>
<dbReference type="ProteomicsDB" id="75821">
    <molecule id="Q969R5-2"/>
</dbReference>
<dbReference type="ProteomicsDB" id="75822">
    <molecule id="Q969R5-3"/>
</dbReference>
<dbReference type="Pumba" id="Q969R5"/>
<dbReference type="ABCD" id="Q969R5">
    <property type="antibodies" value="3 sequenced antibodies"/>
</dbReference>
<dbReference type="Antibodypedia" id="204">
    <property type="antibodies" value="215 antibodies from 29 providers"/>
</dbReference>
<dbReference type="DNASU" id="83746"/>
<dbReference type="Ensembl" id="ENST00000216237.10">
    <molecule id="Q969R5-1"/>
    <property type="protein sequence ID" value="ENSP00000216237.5"/>
    <property type="gene ID" value="ENSG00000100395.15"/>
</dbReference>
<dbReference type="Ensembl" id="ENST00000452106.5">
    <molecule id="Q969R5-2"/>
    <property type="protein sequence ID" value="ENSP00000414423.1"/>
    <property type="gene ID" value="ENSG00000100395.15"/>
</dbReference>
<dbReference type="GeneID" id="83746"/>
<dbReference type="KEGG" id="hsa:83746"/>
<dbReference type="MANE-Select" id="ENST00000216237.10">
    <property type="protein sequence ID" value="ENSP00000216237.5"/>
    <property type="RefSeq nucleotide sequence ID" value="NM_031488.5"/>
    <property type="RefSeq protein sequence ID" value="NP_113676.2"/>
</dbReference>
<dbReference type="UCSC" id="uc003azo.4">
    <molecule id="Q969R5-1"/>
    <property type="organism name" value="human"/>
</dbReference>
<dbReference type="AGR" id="HGNC:18594"/>
<dbReference type="CTD" id="83746"/>
<dbReference type="DisGeNET" id="83746"/>
<dbReference type="GeneCards" id="L3MBTL2"/>
<dbReference type="HGNC" id="HGNC:18594">
    <property type="gene designation" value="L3MBTL2"/>
</dbReference>
<dbReference type="HPA" id="ENSG00000100395">
    <property type="expression patterns" value="Low tissue specificity"/>
</dbReference>
<dbReference type="MIM" id="611865">
    <property type="type" value="gene"/>
</dbReference>
<dbReference type="neXtProt" id="NX_Q969R5"/>
<dbReference type="OpenTargets" id="ENSG00000100395"/>
<dbReference type="PharmGKB" id="PA38356"/>
<dbReference type="VEuPathDB" id="HostDB:ENSG00000100395"/>
<dbReference type="eggNOG" id="KOG3766">
    <property type="taxonomic scope" value="Eukaryota"/>
</dbReference>
<dbReference type="GeneTree" id="ENSGT00940000153840"/>
<dbReference type="HOGENOM" id="CLU_005352_2_1_1"/>
<dbReference type="InParanoid" id="Q969R5"/>
<dbReference type="OMA" id="QVNYPGP"/>
<dbReference type="OrthoDB" id="5800688at2759"/>
<dbReference type="PAN-GO" id="Q969R5">
    <property type="GO annotations" value="4 GO annotations based on evolutionary models"/>
</dbReference>
<dbReference type="PhylomeDB" id="Q969R5"/>
<dbReference type="TreeFam" id="TF316498"/>
<dbReference type="PathwayCommons" id="Q969R5"/>
<dbReference type="Reactome" id="R-HSA-4551638">
    <property type="pathway name" value="SUMOylation of chromatin organization proteins"/>
</dbReference>
<dbReference type="Reactome" id="R-HSA-8953750">
    <property type="pathway name" value="Transcriptional Regulation by E2F6"/>
</dbReference>
<dbReference type="SignaLink" id="Q969R5"/>
<dbReference type="SIGNOR" id="Q969R5"/>
<dbReference type="BioGRID-ORCS" id="83746">
    <property type="hits" value="29 hits in 1161 CRISPR screens"/>
</dbReference>
<dbReference type="ChiTaRS" id="L3MBTL2">
    <property type="organism name" value="human"/>
</dbReference>
<dbReference type="EvolutionaryTrace" id="Q969R5"/>
<dbReference type="GeneWiki" id="L3MBTL2"/>
<dbReference type="GenomeRNAi" id="83746"/>
<dbReference type="Pharos" id="Q969R5">
    <property type="development level" value="Tbio"/>
</dbReference>
<dbReference type="PRO" id="PR:Q969R5"/>
<dbReference type="Proteomes" id="UP000005640">
    <property type="component" value="Chromosome 22"/>
</dbReference>
<dbReference type="RNAct" id="Q969R5">
    <property type="molecule type" value="protein"/>
</dbReference>
<dbReference type="Bgee" id="ENSG00000100395">
    <property type="expression patterns" value="Expressed in pancreatic ductal cell and 182 other cell types or tissues"/>
</dbReference>
<dbReference type="ExpressionAtlas" id="Q969R5">
    <property type="expression patterns" value="baseline and differential"/>
</dbReference>
<dbReference type="GO" id="GO:0005654">
    <property type="term" value="C:nucleoplasm"/>
    <property type="evidence" value="ECO:0000304"/>
    <property type="project" value="Reactome"/>
</dbReference>
<dbReference type="GO" id="GO:0005634">
    <property type="term" value="C:nucleus"/>
    <property type="evidence" value="ECO:0000314"/>
    <property type="project" value="LIFEdb"/>
</dbReference>
<dbReference type="GO" id="GO:0003682">
    <property type="term" value="F:chromatin binding"/>
    <property type="evidence" value="ECO:0000318"/>
    <property type="project" value="GO_Central"/>
</dbReference>
<dbReference type="GO" id="GO:0042393">
    <property type="term" value="F:histone binding"/>
    <property type="evidence" value="ECO:0000314"/>
    <property type="project" value="UniProtKB"/>
</dbReference>
<dbReference type="GO" id="GO:0140117">
    <property type="term" value="F:histone H4K20me1 reader activity"/>
    <property type="evidence" value="ECO:0000314"/>
    <property type="project" value="GO_Central"/>
</dbReference>
<dbReference type="GO" id="GO:0140005">
    <property type="term" value="F:histone H4K20me2 reader activity"/>
    <property type="evidence" value="ECO:0000314"/>
    <property type="project" value="UniProtKB"/>
</dbReference>
<dbReference type="GO" id="GO:0035064">
    <property type="term" value="F:methylated histone binding"/>
    <property type="evidence" value="ECO:0000318"/>
    <property type="project" value="GO_Central"/>
</dbReference>
<dbReference type="GO" id="GO:1990841">
    <property type="term" value="F:promoter-specific chromatin binding"/>
    <property type="evidence" value="ECO:0007669"/>
    <property type="project" value="Ensembl"/>
</dbReference>
<dbReference type="GO" id="GO:0008270">
    <property type="term" value="F:zinc ion binding"/>
    <property type="evidence" value="ECO:0007669"/>
    <property type="project" value="UniProtKB-KW"/>
</dbReference>
<dbReference type="GO" id="GO:0007398">
    <property type="term" value="P:ectoderm development"/>
    <property type="evidence" value="ECO:0007669"/>
    <property type="project" value="Ensembl"/>
</dbReference>
<dbReference type="GO" id="GO:0045892">
    <property type="term" value="P:negative regulation of DNA-templated transcription"/>
    <property type="evidence" value="ECO:0000318"/>
    <property type="project" value="GO_Central"/>
</dbReference>
<dbReference type="GO" id="GO:0010629">
    <property type="term" value="P:negative regulation of gene expression"/>
    <property type="evidence" value="ECO:0007669"/>
    <property type="project" value="Ensembl"/>
</dbReference>
<dbReference type="GO" id="GO:0048863">
    <property type="term" value="P:stem cell differentiation"/>
    <property type="evidence" value="ECO:0007669"/>
    <property type="project" value="Ensembl"/>
</dbReference>
<dbReference type="GO" id="GO:0072089">
    <property type="term" value="P:stem cell proliferation"/>
    <property type="evidence" value="ECO:0007669"/>
    <property type="project" value="Ensembl"/>
</dbReference>
<dbReference type="CDD" id="cd20100">
    <property type="entry name" value="MBT_dSfmbt-like_rpt4"/>
    <property type="match status" value="1"/>
</dbReference>
<dbReference type="CDD" id="cd20121">
    <property type="entry name" value="MBT_L3MBTL2_rpt1"/>
    <property type="match status" value="1"/>
</dbReference>
<dbReference type="CDD" id="cd20124">
    <property type="entry name" value="MBT_L3MBTL2_rpt2"/>
    <property type="match status" value="1"/>
</dbReference>
<dbReference type="CDD" id="cd20127">
    <property type="entry name" value="MBT_L3MBTL2_rpt3"/>
    <property type="match status" value="1"/>
</dbReference>
<dbReference type="FunFam" id="2.30.30.140:FF:000010">
    <property type="entry name" value="MBT domain-containing protein 1 isoform X1"/>
    <property type="match status" value="1"/>
</dbReference>
<dbReference type="FunFam" id="2.30.30.140:FF:000015">
    <property type="entry name" value="MBT domain-containing protein 1 isoform X1"/>
    <property type="match status" value="1"/>
</dbReference>
<dbReference type="FunFam" id="2.30.30.140:FF:000019">
    <property type="entry name" value="MBT domain-containing protein 1 isoform X1"/>
    <property type="match status" value="1"/>
</dbReference>
<dbReference type="FunFam" id="2.30.30.140:FF:000032">
    <property type="entry name" value="MBT domain-containing protein 1 isoform X1"/>
    <property type="match status" value="1"/>
</dbReference>
<dbReference type="FunFam" id="3.30.60.160:FF:000001">
    <property type="entry name" value="MBT domain-containing protein 1 isoform X1"/>
    <property type="match status" value="1"/>
</dbReference>
<dbReference type="Gene3D" id="2.30.30.140">
    <property type="match status" value="4"/>
</dbReference>
<dbReference type="Gene3D" id="3.30.60.160">
    <property type="match status" value="1"/>
</dbReference>
<dbReference type="IDEAL" id="IID00095"/>
<dbReference type="InterPro" id="IPR004092">
    <property type="entry name" value="Mbt"/>
</dbReference>
<dbReference type="InterPro" id="IPR047356">
    <property type="entry name" value="MBT_L3MBTL2_rpt1"/>
</dbReference>
<dbReference type="InterPro" id="IPR047357">
    <property type="entry name" value="MBT_L3MBTL2_rpt2"/>
</dbReference>
<dbReference type="InterPro" id="IPR050548">
    <property type="entry name" value="PcG_chromatin_remod_factors"/>
</dbReference>
<dbReference type="InterPro" id="IPR012313">
    <property type="entry name" value="Znf_FCS"/>
</dbReference>
<dbReference type="InterPro" id="IPR038603">
    <property type="entry name" value="Znf_FCS_sf"/>
</dbReference>
<dbReference type="PANTHER" id="PTHR12247:SF64">
    <property type="entry name" value="LETHAL(3)MALIGNANT BRAIN TUMOR-LIKE PROTEIN 2"/>
    <property type="match status" value="1"/>
</dbReference>
<dbReference type="PANTHER" id="PTHR12247">
    <property type="entry name" value="POLYCOMB GROUP PROTEIN"/>
    <property type="match status" value="1"/>
</dbReference>
<dbReference type="Pfam" id="PF02820">
    <property type="entry name" value="MBT"/>
    <property type="match status" value="4"/>
</dbReference>
<dbReference type="Pfam" id="PF21319">
    <property type="entry name" value="zf-FCS_1"/>
    <property type="match status" value="1"/>
</dbReference>
<dbReference type="SMART" id="SM00561">
    <property type="entry name" value="MBT"/>
    <property type="match status" value="4"/>
</dbReference>
<dbReference type="SUPFAM" id="SSF63748">
    <property type="entry name" value="Tudor/PWWP/MBT"/>
    <property type="match status" value="4"/>
</dbReference>
<dbReference type="PROSITE" id="PS51079">
    <property type="entry name" value="MBT"/>
    <property type="match status" value="4"/>
</dbReference>
<dbReference type="PROSITE" id="PS51024">
    <property type="entry name" value="ZF_FCS"/>
    <property type="match status" value="1"/>
</dbReference>
<proteinExistence type="evidence at protein level"/>
<gene>
    <name type="primary">L3MBTL2</name>
</gene>
<protein>
    <recommendedName>
        <fullName>Lethal(3)malignant brain tumor-like protein 2</fullName>
        <shortName>H-l(3)mbt-like protein 2</shortName>
        <shortName>L(3)mbt-like protein 2</shortName>
    </recommendedName>
</protein>
<evidence type="ECO:0000255" key="1">
    <source>
        <dbReference type="PROSITE-ProRule" id="PRU00367"/>
    </source>
</evidence>
<evidence type="ECO:0000256" key="2">
    <source>
        <dbReference type="SAM" id="MobiDB-lite"/>
    </source>
</evidence>
<evidence type="ECO:0000269" key="3">
    <source>
    </source>
</evidence>
<evidence type="ECO:0000269" key="4">
    <source>
    </source>
</evidence>
<evidence type="ECO:0000303" key="5">
    <source>
    </source>
</evidence>
<evidence type="ECO:0000303" key="6">
    <source>
    </source>
</evidence>
<evidence type="ECO:0000305" key="7"/>
<evidence type="ECO:0007744" key="8">
    <source>
    </source>
</evidence>
<evidence type="ECO:0007744" key="9">
    <source>
    </source>
</evidence>
<evidence type="ECO:0007744" key="10">
    <source>
    </source>
</evidence>
<evidence type="ECO:0007744" key="11">
    <source>
    </source>
</evidence>
<evidence type="ECO:0007744" key="12">
    <source>
    </source>
</evidence>
<evidence type="ECO:0007744" key="13">
    <source>
    </source>
</evidence>
<evidence type="ECO:0007744" key="14">
    <source>
    </source>
</evidence>
<evidence type="ECO:0007744" key="15">
    <source>
    </source>
</evidence>
<evidence type="ECO:0007829" key="16">
    <source>
        <dbReference type="PDB" id="2W0T"/>
    </source>
</evidence>
<evidence type="ECO:0007829" key="17">
    <source>
        <dbReference type="PDB" id="3CEY"/>
    </source>
</evidence>
<evidence type="ECO:0007829" key="18">
    <source>
        <dbReference type="PDB" id="3F70"/>
    </source>
</evidence>
<organism>
    <name type="scientific">Homo sapiens</name>
    <name type="common">Human</name>
    <dbReference type="NCBI Taxonomy" id="9606"/>
    <lineage>
        <taxon>Eukaryota</taxon>
        <taxon>Metazoa</taxon>
        <taxon>Chordata</taxon>
        <taxon>Craniata</taxon>
        <taxon>Vertebrata</taxon>
        <taxon>Euteleostomi</taxon>
        <taxon>Mammalia</taxon>
        <taxon>Eutheria</taxon>
        <taxon>Euarchontoglires</taxon>
        <taxon>Primates</taxon>
        <taxon>Haplorrhini</taxon>
        <taxon>Catarrhini</taxon>
        <taxon>Hominidae</taxon>
        <taxon>Homo</taxon>
    </lineage>
</organism>
<accession>Q969R5</accession>
<accession>Q8TEN1</accession>
<accession>Q96SC4</accession>
<accession>Q9BQI2</accession>
<accession>Q9UGS4</accession>
<comment type="function">
    <text evidence="3">Putative Polycomb group (PcG) protein. PcG proteins maintain the transcriptionally repressive state of genes, probably via a modification of chromatin, rendering it heritably changed in its expressibility. Its association with a chromatin-remodeling complex suggests that it may contribute to prevent expression of genes that trigger the cell into mitosis. Binds to monomethylated and dimethylated 'Lys-20' on histone H4. Binds histone H3 peptides that are monomethylated or dimethylated on 'Lys-4', 'Lys-9' or 'Lys-27'.</text>
</comment>
<comment type="subunit">
    <text evidence="3 4">Part of the E2F6.com-1 complex in G0 phase composed of E2F6, MGA, MAX, TFDP1, CBX3, BAT8, EUHMTASE1, RING1, RNF2, MBLR, BAT8 and YAF2.</text>
</comment>
<comment type="interaction">
    <interactant intactId="EBI-739909">
        <id>Q969R5</id>
    </interactant>
    <interactant intactId="EBI-746752">
        <id>Q9Y2J4</id>
        <label>AMOTL2</label>
    </interactant>
    <organismsDiffer>false</organismsDiffer>
    <experiments>3</experiments>
</comment>
<comment type="interaction">
    <interactant intactId="EBI-739909">
        <id>Q969R5</id>
    </interactant>
    <interactant intactId="EBI-10181188">
        <id>Q8N7W2-2</id>
        <label>BEND7</label>
    </interactant>
    <organismsDiffer>false</organismsDiffer>
    <experiments>8</experiments>
</comment>
<comment type="interaction">
    <interactant intactId="EBI-739909">
        <id>Q969R5</id>
    </interactant>
    <interactant intactId="EBI-12191873">
        <id>Q86UB2</id>
        <label>BIVM</label>
    </interactant>
    <organismsDiffer>false</organismsDiffer>
    <experiments>3</experiments>
</comment>
<comment type="interaction">
    <interactant intactId="EBI-739909">
        <id>Q969R5</id>
    </interactant>
    <interactant intactId="EBI-11530605">
        <id>Q9H257-2</id>
        <label>CARD9</label>
    </interactant>
    <organismsDiffer>false</organismsDiffer>
    <experiments>3</experiments>
</comment>
<comment type="interaction">
    <interactant intactId="EBI-739909">
        <id>Q969R5</id>
    </interactant>
    <interactant intactId="EBI-711501">
        <id>Q9BWC9</id>
        <label>CCDC106</label>
    </interactant>
    <organismsDiffer>false</organismsDiffer>
    <experiments>3</experiments>
</comment>
<comment type="interaction">
    <interactant intactId="EBI-739909">
        <id>Q969R5</id>
    </interactant>
    <interactant intactId="EBI-742887">
        <id>Q8TAP6</id>
        <label>CEP76</label>
    </interactant>
    <organismsDiffer>false</organismsDiffer>
    <experiments>3</experiments>
</comment>
<comment type="interaction">
    <interactant intactId="EBI-739909">
        <id>Q969R5</id>
    </interactant>
    <interactant intactId="EBI-2349927">
        <id>Q5JST6</id>
        <label>EFHC2</label>
    </interactant>
    <organismsDiffer>false</organismsDiffer>
    <experiments>3</experiments>
</comment>
<comment type="interaction">
    <interactant intactId="EBI-739909">
        <id>Q969R5</id>
    </interactant>
    <interactant intactId="EBI-301024">
        <id>Q9NRA8</id>
        <label>EIF4ENIF1</label>
    </interactant>
    <organismsDiffer>false</organismsDiffer>
    <experiments>3</experiments>
</comment>
<comment type="interaction">
    <interactant intactId="EBI-739909">
        <id>Q969R5</id>
    </interactant>
    <interactant intactId="EBI-19153639">
        <id>Q9NTX9</id>
        <label>FAM217B</label>
    </interactant>
    <organismsDiffer>false</organismsDiffer>
    <experiments>3</experiments>
</comment>
<comment type="interaction">
    <interactant intactId="EBI-739909">
        <id>Q969R5</id>
    </interactant>
    <interactant intactId="EBI-1052570">
        <id>O95995</id>
        <label>GAS8</label>
    </interactant>
    <organismsDiffer>false</organismsDiffer>
    <experiments>3</experiments>
</comment>
<comment type="interaction">
    <interactant intactId="EBI-739909">
        <id>Q969R5</id>
    </interactant>
    <interactant intactId="EBI-743722">
        <id>Q5VSY0</id>
        <label>GKAP1</label>
    </interactant>
    <organismsDiffer>false</organismsDiffer>
    <experiments>3</experiments>
</comment>
<comment type="interaction">
    <interactant intactId="EBI-739909">
        <id>Q969R5</id>
    </interactant>
    <interactant intactId="EBI-618309">
        <id>Q08379</id>
        <label>GOLGA2</label>
    </interactant>
    <organismsDiffer>false</organismsDiffer>
    <experiments>3</experiments>
</comment>
<comment type="interaction">
    <interactant intactId="EBI-739909">
        <id>Q969R5</id>
    </interactant>
    <interactant intactId="EBI-11519926">
        <id>Q6PI77</id>
        <label>GPRASP3</label>
    </interactant>
    <organismsDiffer>false</organismsDiffer>
    <experiments>3</experiments>
</comment>
<comment type="interaction">
    <interactant intactId="EBI-739909">
        <id>Q969R5</id>
    </interactant>
    <interactant intactId="EBI-607682">
        <id>O15379</id>
        <label>HDAC3</label>
    </interactant>
    <organismsDiffer>false</organismsDiffer>
    <experiments>6</experiments>
</comment>
<comment type="interaction">
    <interactant intactId="EBI-739909">
        <id>Q969R5</id>
    </interactant>
    <interactant intactId="EBI-7116203">
        <id>O75031</id>
        <label>HSF2BP</label>
    </interactant>
    <organismsDiffer>false</organismsDiffer>
    <experiments>3</experiments>
</comment>
<comment type="interaction">
    <interactant intactId="EBI-739909">
        <id>Q969R5</id>
    </interactant>
    <interactant intactId="EBI-751711">
        <id>P61244</id>
        <label>MAX</label>
    </interactant>
    <organismsDiffer>false</organismsDiffer>
    <experiments>8</experiments>
</comment>
<comment type="interaction">
    <interactant intactId="EBI-739909">
        <id>Q969R5</id>
    </interactant>
    <interactant intactId="EBI-399266">
        <id>Q9HAF1</id>
        <label>MEAF6</label>
    </interactant>
    <organismsDiffer>false</organismsDiffer>
    <experiments>5</experiments>
</comment>
<comment type="interaction">
    <interactant intactId="EBI-739909">
        <id>Q969R5</id>
    </interactant>
    <interactant intactId="EBI-2864512">
        <id>P50221</id>
        <label>MEOX1</label>
    </interactant>
    <organismsDiffer>false</organismsDiffer>
    <experiments>3</experiments>
</comment>
<comment type="interaction">
    <interactant intactId="EBI-739909">
        <id>Q969R5</id>
    </interactant>
    <interactant intactId="EBI-11742836">
        <id>Q16656-4</id>
        <label>NRF1</label>
    </interactant>
    <organismsDiffer>false</organismsDiffer>
    <experiments>3</experiments>
</comment>
<comment type="interaction">
    <interactant intactId="EBI-739909">
        <id>Q969R5</id>
    </interactant>
    <interactant intactId="EBI-712261">
        <id>P22234</id>
        <label>PAICS</label>
    </interactant>
    <organismsDiffer>false</organismsDiffer>
    <experiments>6</experiments>
</comment>
<comment type="interaction">
    <interactant intactId="EBI-739909">
        <id>Q969R5</id>
    </interactant>
    <interactant intactId="EBI-10276329">
        <id>Q8WUB8-2</id>
        <label>PHF10</label>
    </interactant>
    <organismsDiffer>false</organismsDiffer>
    <experiments>6</experiments>
</comment>
<comment type="interaction">
    <interactant intactId="EBI-739909">
        <id>Q969R5</id>
    </interactant>
    <interactant intactId="EBI-79165">
        <id>Q9NRD5</id>
        <label>PICK1</label>
    </interactant>
    <organismsDiffer>false</organismsDiffer>
    <experiments>3</experiments>
</comment>
<comment type="interaction">
    <interactant intactId="EBI-739909">
        <id>Q969R5</id>
    </interactant>
    <interactant intactId="EBI-12029004">
        <id>P78424</id>
        <label>POU6F2</label>
    </interactant>
    <organismsDiffer>false</organismsDiffer>
    <experiments>3</experiments>
</comment>
<comment type="interaction">
    <interactant intactId="EBI-739909">
        <id>Q969R5</id>
    </interactant>
    <interactant intactId="EBI-2805516">
        <id>P31321</id>
        <label>PRKAR1B</label>
    </interactant>
    <organismsDiffer>false</organismsDiffer>
    <experiments>3</experiments>
</comment>
<comment type="interaction">
    <interactant intactId="EBI-739909">
        <id>Q969R5</id>
    </interactant>
    <interactant intactId="EBI-1210429">
        <id>Q9NYW8</id>
        <label>RBAK</label>
    </interactant>
    <organismsDiffer>false</organismsDiffer>
    <experiments>3</experiments>
</comment>
<comment type="interaction">
    <interactant intactId="EBI-739909">
        <id>Q969R5</id>
    </interactant>
    <interactant intactId="EBI-10829018">
        <id>Q04864-2</id>
        <label>REL</label>
    </interactant>
    <organismsDiffer>false</organismsDiffer>
    <experiments>3</experiments>
</comment>
<comment type="interaction">
    <interactant intactId="EBI-739909">
        <id>Q969R5</id>
    </interactant>
    <interactant intactId="EBI-2932733">
        <id>P36955</id>
        <label>SERPINF1</label>
    </interactant>
    <organismsDiffer>false</organismsDiffer>
    <experiments>2</experiments>
</comment>
<comment type="interaction">
    <interactant intactId="EBI-739909">
        <id>Q969R5</id>
    </interactant>
    <interactant intactId="EBI-12231891">
        <id>Q9Y2M2-2</id>
        <label>SSUH2</label>
    </interactant>
    <organismsDiffer>false</organismsDiffer>
    <experiments>3</experiments>
</comment>
<comment type="interaction">
    <interactant intactId="EBI-739909">
        <id>Q969R5</id>
    </interactant>
    <interactant intactId="EBI-745680">
        <id>Q96MF2</id>
        <label>STAC3</label>
    </interactant>
    <organismsDiffer>false</organismsDiffer>
    <experiments>6</experiments>
</comment>
<comment type="interaction">
    <interactant intactId="EBI-739909">
        <id>Q969R5</id>
    </interactant>
    <interactant intactId="EBI-373258">
        <id>O75886</id>
        <label>STAM2</label>
    </interactant>
    <organismsDiffer>false</organismsDiffer>
    <experiments>4</experiments>
</comment>
<comment type="interaction">
    <interactant intactId="EBI-739909">
        <id>Q969R5</id>
    </interactant>
    <interactant intactId="EBI-529518">
        <id>Q86VP1</id>
        <label>TAX1BP1</label>
    </interactant>
    <organismsDiffer>false</organismsDiffer>
    <experiments>3</experiments>
</comment>
<comment type="interaction">
    <interactant intactId="EBI-739909">
        <id>Q969R5</id>
    </interactant>
    <interactant intactId="EBI-12133518">
        <id>A1L3A9</id>
        <label>TBC1D9B</label>
    </interactant>
    <organismsDiffer>false</organismsDiffer>
    <experiments>3</experiments>
</comment>
<comment type="interaction">
    <interactant intactId="EBI-739909">
        <id>Q969R5</id>
    </interactant>
    <interactant intactId="EBI-10217736">
        <id>Q66K14-2</id>
        <label>TBC1D9B</label>
    </interactant>
    <organismsDiffer>false</organismsDiffer>
    <experiments>3</experiments>
</comment>
<comment type="interaction">
    <interactant intactId="EBI-739909">
        <id>Q969R5</id>
    </interactant>
    <interactant intactId="EBI-10180409">
        <id>Q969V4</id>
        <label>TEKT1</label>
    </interactant>
    <organismsDiffer>false</organismsDiffer>
    <experiments>3</experiments>
</comment>
<comment type="interaction">
    <interactant intactId="EBI-739909">
        <id>Q969R5</id>
    </interactant>
    <interactant intactId="EBI-741515">
        <id>Q9NVV9</id>
        <label>THAP1</label>
    </interactant>
    <organismsDiffer>false</organismsDiffer>
    <experiments>3</experiments>
</comment>
<comment type="interaction">
    <interactant intactId="EBI-739909">
        <id>Q969R5</id>
    </interactant>
    <interactant intactId="EBI-717810">
        <id>Q08117</id>
        <label>TLE5</label>
    </interactant>
    <organismsDiffer>false</organismsDiffer>
    <experiments>3</experiments>
</comment>
<comment type="interaction">
    <interactant intactId="EBI-739909">
        <id>Q969R5</id>
    </interactant>
    <interactant intactId="EBI-746692">
        <id>P19237</id>
        <label>TNNI1</label>
    </interactant>
    <organismsDiffer>false</organismsDiffer>
    <experiments>3</experiments>
</comment>
<comment type="interaction">
    <interactant intactId="EBI-739909">
        <id>Q969R5</id>
    </interactant>
    <interactant intactId="EBI-5235829">
        <id>Q8IWZ5</id>
        <label>TRIM42</label>
    </interactant>
    <organismsDiffer>false</organismsDiffer>
    <experiments>3</experiments>
</comment>
<comment type="interaction">
    <interactant intactId="EBI-739909">
        <id>Q969R5</id>
    </interactant>
    <interactant intactId="EBI-9867283">
        <id>Q86XT4</id>
        <label>TRIM50</label>
    </interactant>
    <organismsDiffer>false</organismsDiffer>
    <experiments>3</experiments>
</comment>
<comment type="interaction">
    <interactant intactId="EBI-739909">
        <id>Q969R5</id>
    </interactant>
    <interactant intactId="EBI-723389">
        <id>Q6FI91</id>
        <label>TSPYL</label>
    </interactant>
    <organismsDiffer>false</organismsDiffer>
    <experiments>3</experiments>
</comment>
<comment type="interaction">
    <interactant intactId="EBI-739909">
        <id>Q969R5</id>
    </interactant>
    <interactant intactId="EBI-3918996">
        <id>Q9HCK0</id>
        <label>ZBTB26</label>
    </interactant>
    <organismsDiffer>false</organismsDiffer>
    <experiments>3</experiments>
</comment>
<comment type="interaction">
    <interactant intactId="EBI-739909">
        <id>Q969R5</id>
    </interactant>
    <interactant intactId="EBI-744864">
        <id>P10074</id>
        <label>ZBTB48</label>
    </interactant>
    <organismsDiffer>false</organismsDiffer>
    <experiments>3</experiments>
</comment>
<comment type="interaction">
    <interactant intactId="EBI-739909">
        <id>Q969R5</id>
    </interactant>
    <interactant intactId="EBI-711679">
        <id>Q9NTW7</id>
        <label>ZFP64</label>
    </interactant>
    <organismsDiffer>false</organismsDiffer>
    <experiments>3</experiments>
</comment>
<comment type="interaction">
    <interactant intactId="EBI-739909">
        <id>Q969R5</id>
    </interactant>
    <interactant intactId="EBI-12239601">
        <id>P08048</id>
        <label>ZFY</label>
    </interactant>
    <organismsDiffer>false</organismsDiffer>
    <experiments>6</experiments>
</comment>
<comment type="interaction">
    <interactant intactId="EBI-739909">
        <id>Q969R5</id>
    </interactant>
    <interactant intactId="EBI-11986485">
        <id>Q7Z7K2</id>
        <label>ZNF467</label>
    </interactant>
    <organismsDiffer>false</organismsDiffer>
    <experiments>3</experiments>
</comment>
<comment type="interaction">
    <interactant intactId="EBI-739909">
        <id>Q969R5</id>
    </interactant>
    <interactant intactId="EBI-18036029">
        <id>Q3KNS6-3</id>
        <label>ZNF829</label>
    </interactant>
    <organismsDiffer>false</organismsDiffer>
    <experiments>3</experiments>
</comment>
<comment type="subcellular location">
    <subcellularLocation>
        <location evidence="7">Nucleus</location>
    </subcellularLocation>
</comment>
<comment type="alternative products">
    <event type="alternative splicing"/>
    <isoform>
        <id>Q969R5-1</id>
        <name>1</name>
        <name>A</name>
        <sequence type="displayed"/>
    </isoform>
    <isoform>
        <id>Q969R5-2</id>
        <name>2</name>
        <name>B</name>
        <sequence type="described" ref="VSP_003904 VSP_003905"/>
    </isoform>
    <isoform>
        <id>Q969R5-3</id>
        <name>3</name>
        <sequence type="described" ref="VSP_003906 VSP_003907"/>
    </isoform>
</comment>
<comment type="sequence caution" evidence="7">
    <conflict type="miscellaneous discrepancy">
        <sequence resource="EMBL-CDS" id="BAB84917"/>
    </conflict>
    <text>Intron retention.</text>
</comment>
<comment type="sequence caution" evidence="7">
    <conflict type="miscellaneous discrepancy">
        <sequence resource="EMBL-CDS" id="BAC04936"/>
    </conflict>
    <text>Intron retention.</text>
</comment>
<reference key="1">
    <citation type="journal article" date="2001" name="FEBS Lett.">
        <title>Molecular characterization of h-l(3)mbt-like: a new member of the human mbt family.</title>
        <authorList>
            <person name="Wismar J."/>
        </authorList>
    </citation>
    <scope>NUCLEOTIDE SEQUENCE [MRNA] (ISOFORMS 1 AND 2)</scope>
</reference>
<reference key="2">
    <citation type="journal article" date="2001" name="Genome Res.">
        <title>Towards a catalog of human genes and proteins: sequencing and analysis of 500 novel complete protein coding human cDNAs.</title>
        <authorList>
            <person name="Wiemann S."/>
            <person name="Weil B."/>
            <person name="Wellenreuther R."/>
            <person name="Gassenhuber J."/>
            <person name="Glassl S."/>
            <person name="Ansorge W."/>
            <person name="Boecher M."/>
            <person name="Bloecker H."/>
            <person name="Bauersachs S."/>
            <person name="Blum H."/>
            <person name="Lauber J."/>
            <person name="Duesterhoeft A."/>
            <person name="Beyer A."/>
            <person name="Koehrer K."/>
            <person name="Strack N."/>
            <person name="Mewes H.-W."/>
            <person name="Ottenwaelder B."/>
            <person name="Obermaier B."/>
            <person name="Tampe J."/>
            <person name="Heubner D."/>
            <person name="Wambutt R."/>
            <person name="Korn B."/>
            <person name="Klein M."/>
            <person name="Poustka A."/>
        </authorList>
    </citation>
    <scope>NUCLEOTIDE SEQUENCE [LARGE SCALE MRNA] (ISOFORM 1)</scope>
    <source>
        <tissue>Amygdala</tissue>
    </source>
</reference>
<reference key="3">
    <citation type="journal article" date="2004" name="Nat. Genet.">
        <title>Complete sequencing and characterization of 21,243 full-length human cDNAs.</title>
        <authorList>
            <person name="Ota T."/>
            <person name="Suzuki Y."/>
            <person name="Nishikawa T."/>
            <person name="Otsuki T."/>
            <person name="Sugiyama T."/>
            <person name="Irie R."/>
            <person name="Wakamatsu A."/>
            <person name="Hayashi K."/>
            <person name="Sato H."/>
            <person name="Nagai K."/>
            <person name="Kimura K."/>
            <person name="Makita H."/>
            <person name="Sekine M."/>
            <person name="Obayashi M."/>
            <person name="Nishi T."/>
            <person name="Shibahara T."/>
            <person name="Tanaka T."/>
            <person name="Ishii S."/>
            <person name="Yamamoto J."/>
            <person name="Saito K."/>
            <person name="Kawai Y."/>
            <person name="Isono Y."/>
            <person name="Nakamura Y."/>
            <person name="Nagahari K."/>
            <person name="Murakami K."/>
            <person name="Yasuda T."/>
            <person name="Iwayanagi T."/>
            <person name="Wagatsuma M."/>
            <person name="Shiratori A."/>
            <person name="Sudo H."/>
            <person name="Hosoiri T."/>
            <person name="Kaku Y."/>
            <person name="Kodaira H."/>
            <person name="Kondo H."/>
            <person name="Sugawara M."/>
            <person name="Takahashi M."/>
            <person name="Kanda K."/>
            <person name="Yokoi T."/>
            <person name="Furuya T."/>
            <person name="Kikkawa E."/>
            <person name="Omura Y."/>
            <person name="Abe K."/>
            <person name="Kamihara K."/>
            <person name="Katsuta N."/>
            <person name="Sato K."/>
            <person name="Tanikawa M."/>
            <person name="Yamazaki M."/>
            <person name="Ninomiya K."/>
            <person name="Ishibashi T."/>
            <person name="Yamashita H."/>
            <person name="Murakawa K."/>
            <person name="Fujimori K."/>
            <person name="Tanai H."/>
            <person name="Kimata M."/>
            <person name="Watanabe M."/>
            <person name="Hiraoka S."/>
            <person name="Chiba Y."/>
            <person name="Ishida S."/>
            <person name="Ono Y."/>
            <person name="Takiguchi S."/>
            <person name="Watanabe S."/>
            <person name="Yosida M."/>
            <person name="Hotuta T."/>
            <person name="Kusano J."/>
            <person name="Kanehori K."/>
            <person name="Takahashi-Fujii A."/>
            <person name="Hara H."/>
            <person name="Tanase T.-O."/>
            <person name="Nomura Y."/>
            <person name="Togiya S."/>
            <person name="Komai F."/>
            <person name="Hara R."/>
            <person name="Takeuchi K."/>
            <person name="Arita M."/>
            <person name="Imose N."/>
            <person name="Musashino K."/>
            <person name="Yuuki H."/>
            <person name="Oshima A."/>
            <person name="Sasaki N."/>
            <person name="Aotsuka S."/>
            <person name="Yoshikawa Y."/>
            <person name="Matsunawa H."/>
            <person name="Ichihara T."/>
            <person name="Shiohata N."/>
            <person name="Sano S."/>
            <person name="Moriya S."/>
            <person name="Momiyama H."/>
            <person name="Satoh N."/>
            <person name="Takami S."/>
            <person name="Terashima Y."/>
            <person name="Suzuki O."/>
            <person name="Nakagawa S."/>
            <person name="Senoh A."/>
            <person name="Mizoguchi H."/>
            <person name="Goto Y."/>
            <person name="Shimizu F."/>
            <person name="Wakebe H."/>
            <person name="Hishigaki H."/>
            <person name="Watanabe T."/>
            <person name="Sugiyama A."/>
            <person name="Takemoto M."/>
            <person name="Kawakami B."/>
            <person name="Yamazaki M."/>
            <person name="Watanabe K."/>
            <person name="Kumagai A."/>
            <person name="Itakura S."/>
            <person name="Fukuzumi Y."/>
            <person name="Fujimori Y."/>
            <person name="Komiyama M."/>
            <person name="Tashiro H."/>
            <person name="Tanigami A."/>
            <person name="Fujiwara T."/>
            <person name="Ono T."/>
            <person name="Yamada K."/>
            <person name="Fujii Y."/>
            <person name="Ozaki K."/>
            <person name="Hirao M."/>
            <person name="Ohmori Y."/>
            <person name="Kawabata A."/>
            <person name="Hikiji T."/>
            <person name="Kobatake N."/>
            <person name="Inagaki H."/>
            <person name="Ikema Y."/>
            <person name="Okamoto S."/>
            <person name="Okitani R."/>
            <person name="Kawakami T."/>
            <person name="Noguchi S."/>
            <person name="Itoh T."/>
            <person name="Shigeta K."/>
            <person name="Senba T."/>
            <person name="Matsumura K."/>
            <person name="Nakajima Y."/>
            <person name="Mizuno T."/>
            <person name="Morinaga M."/>
            <person name="Sasaki M."/>
            <person name="Togashi T."/>
            <person name="Oyama M."/>
            <person name="Hata H."/>
            <person name="Watanabe M."/>
            <person name="Komatsu T."/>
            <person name="Mizushima-Sugano J."/>
            <person name="Satoh T."/>
            <person name="Shirai Y."/>
            <person name="Takahashi Y."/>
            <person name="Nakagawa K."/>
            <person name="Okumura K."/>
            <person name="Nagase T."/>
            <person name="Nomura N."/>
            <person name="Kikuchi H."/>
            <person name="Masuho Y."/>
            <person name="Yamashita R."/>
            <person name="Nakai K."/>
            <person name="Yada T."/>
            <person name="Nakamura Y."/>
            <person name="Ohara O."/>
            <person name="Isogai T."/>
            <person name="Sugano S."/>
        </authorList>
    </citation>
    <scope>NUCLEOTIDE SEQUENCE [LARGE SCALE MRNA] (ISOFORM 3)</scope>
    <source>
        <tissue>Small intestine</tissue>
        <tissue>Spleen</tissue>
    </source>
</reference>
<reference key="4">
    <citation type="journal article" date="2004" name="Genome Biol.">
        <title>A genome annotation-driven approach to cloning the human ORFeome.</title>
        <authorList>
            <person name="Collins J.E."/>
            <person name="Wright C.L."/>
            <person name="Edwards C.A."/>
            <person name="Davis M.P."/>
            <person name="Grinham J.A."/>
            <person name="Cole C.G."/>
            <person name="Goward M.E."/>
            <person name="Aguado B."/>
            <person name="Mallya M."/>
            <person name="Mokrab Y."/>
            <person name="Huckle E.J."/>
            <person name="Beare D.M."/>
            <person name="Dunham I."/>
        </authorList>
    </citation>
    <scope>NUCLEOTIDE SEQUENCE [LARGE SCALE MRNA] (ISOFORM 1)</scope>
</reference>
<reference key="5">
    <citation type="journal article" date="1999" name="Nature">
        <title>The DNA sequence of human chromosome 22.</title>
        <authorList>
            <person name="Dunham I."/>
            <person name="Hunt A.R."/>
            <person name="Collins J.E."/>
            <person name="Bruskiewich R."/>
            <person name="Beare D.M."/>
            <person name="Clamp M."/>
            <person name="Smink L.J."/>
            <person name="Ainscough R."/>
            <person name="Almeida J.P."/>
            <person name="Babbage A.K."/>
            <person name="Bagguley C."/>
            <person name="Bailey J."/>
            <person name="Barlow K.F."/>
            <person name="Bates K.N."/>
            <person name="Beasley O.P."/>
            <person name="Bird C.P."/>
            <person name="Blakey S.E."/>
            <person name="Bridgeman A.M."/>
            <person name="Buck D."/>
            <person name="Burgess J."/>
            <person name="Burrill W.D."/>
            <person name="Burton J."/>
            <person name="Carder C."/>
            <person name="Carter N.P."/>
            <person name="Chen Y."/>
            <person name="Clark G."/>
            <person name="Clegg S.M."/>
            <person name="Cobley V.E."/>
            <person name="Cole C.G."/>
            <person name="Collier R.E."/>
            <person name="Connor R."/>
            <person name="Conroy D."/>
            <person name="Corby N.R."/>
            <person name="Coville G.J."/>
            <person name="Cox A.V."/>
            <person name="Davis J."/>
            <person name="Dawson E."/>
            <person name="Dhami P.D."/>
            <person name="Dockree C."/>
            <person name="Dodsworth S.J."/>
            <person name="Durbin R.M."/>
            <person name="Ellington A.G."/>
            <person name="Evans K.L."/>
            <person name="Fey J.M."/>
            <person name="Fleming K."/>
            <person name="French L."/>
            <person name="Garner A.A."/>
            <person name="Gilbert J.G.R."/>
            <person name="Goward M.E."/>
            <person name="Grafham D.V."/>
            <person name="Griffiths M.N.D."/>
            <person name="Hall C."/>
            <person name="Hall R.E."/>
            <person name="Hall-Tamlyn G."/>
            <person name="Heathcott R.W."/>
            <person name="Ho S."/>
            <person name="Holmes S."/>
            <person name="Hunt S.E."/>
            <person name="Jones M.C."/>
            <person name="Kershaw J."/>
            <person name="Kimberley A.M."/>
            <person name="King A."/>
            <person name="Laird G.K."/>
            <person name="Langford C.F."/>
            <person name="Leversha M.A."/>
            <person name="Lloyd C."/>
            <person name="Lloyd D.M."/>
            <person name="Martyn I.D."/>
            <person name="Mashreghi-Mohammadi M."/>
            <person name="Matthews L.H."/>
            <person name="Mccann O.T."/>
            <person name="Mcclay J."/>
            <person name="Mclaren S."/>
            <person name="McMurray A.A."/>
            <person name="Milne S.A."/>
            <person name="Mortimore B.J."/>
            <person name="Odell C.N."/>
            <person name="Pavitt R."/>
            <person name="Pearce A.V."/>
            <person name="Pearson D."/>
            <person name="Phillimore B.J.C.T."/>
            <person name="Phillips S.H."/>
            <person name="Plumb R.W."/>
            <person name="Ramsay H."/>
            <person name="Ramsey Y."/>
            <person name="Rogers L."/>
            <person name="Ross M.T."/>
            <person name="Scott C.E."/>
            <person name="Sehra H.K."/>
            <person name="Skuce C.D."/>
            <person name="Smalley S."/>
            <person name="Smith M.L."/>
            <person name="Soderlund C."/>
            <person name="Spragon L."/>
            <person name="Steward C.A."/>
            <person name="Sulston J.E."/>
            <person name="Swann R.M."/>
            <person name="Vaudin M."/>
            <person name="Wall M."/>
            <person name="Wallis J.M."/>
            <person name="Whiteley M.N."/>
            <person name="Willey D.L."/>
            <person name="Williams L."/>
            <person name="Williams S.A."/>
            <person name="Williamson H."/>
            <person name="Wilmer T.E."/>
            <person name="Wilming L."/>
            <person name="Wright C.L."/>
            <person name="Hubbard T."/>
            <person name="Bentley D.R."/>
            <person name="Beck S."/>
            <person name="Rogers J."/>
            <person name="Shimizu N."/>
            <person name="Minoshima S."/>
            <person name="Kawasaki K."/>
            <person name="Sasaki T."/>
            <person name="Asakawa S."/>
            <person name="Kudoh J."/>
            <person name="Shintani A."/>
            <person name="Shibuya K."/>
            <person name="Yoshizaki Y."/>
            <person name="Aoki N."/>
            <person name="Mitsuyama S."/>
            <person name="Roe B.A."/>
            <person name="Chen F."/>
            <person name="Chu L."/>
            <person name="Crabtree J."/>
            <person name="Deschamps S."/>
            <person name="Do A."/>
            <person name="Do T."/>
            <person name="Dorman A."/>
            <person name="Fang F."/>
            <person name="Fu Y."/>
            <person name="Hu P."/>
            <person name="Hua A."/>
            <person name="Kenton S."/>
            <person name="Lai H."/>
            <person name="Lao H.I."/>
            <person name="Lewis J."/>
            <person name="Lewis S."/>
            <person name="Lin S.-P."/>
            <person name="Loh P."/>
            <person name="Malaj E."/>
            <person name="Nguyen T."/>
            <person name="Pan H."/>
            <person name="Phan S."/>
            <person name="Qi S."/>
            <person name="Qian Y."/>
            <person name="Ray L."/>
            <person name="Ren Q."/>
            <person name="Shaull S."/>
            <person name="Sloan D."/>
            <person name="Song L."/>
            <person name="Wang Q."/>
            <person name="Wang Y."/>
            <person name="Wang Z."/>
            <person name="White J."/>
            <person name="Willingham D."/>
            <person name="Wu H."/>
            <person name="Yao Z."/>
            <person name="Zhan M."/>
            <person name="Zhang G."/>
            <person name="Chissoe S."/>
            <person name="Murray J."/>
            <person name="Miller N."/>
            <person name="Minx P."/>
            <person name="Fulton R."/>
            <person name="Johnson D."/>
            <person name="Bemis G."/>
            <person name="Bentley D."/>
            <person name="Bradshaw H."/>
            <person name="Bourne S."/>
            <person name="Cordes M."/>
            <person name="Du Z."/>
            <person name="Fulton L."/>
            <person name="Goela D."/>
            <person name="Graves T."/>
            <person name="Hawkins J."/>
            <person name="Hinds K."/>
            <person name="Kemp K."/>
            <person name="Latreille P."/>
            <person name="Layman D."/>
            <person name="Ozersky P."/>
            <person name="Rohlfing T."/>
            <person name="Scheet P."/>
            <person name="Walker C."/>
            <person name="Wamsley A."/>
            <person name="Wohldmann P."/>
            <person name="Pepin K."/>
            <person name="Nelson J."/>
            <person name="Korf I."/>
            <person name="Bedell J.A."/>
            <person name="Hillier L.W."/>
            <person name="Mardis E."/>
            <person name="Waterston R."/>
            <person name="Wilson R."/>
            <person name="Emanuel B.S."/>
            <person name="Shaikh T."/>
            <person name="Kurahashi H."/>
            <person name="Saitta S."/>
            <person name="Budarf M.L."/>
            <person name="McDermid H.E."/>
            <person name="Johnson A."/>
            <person name="Wong A.C.C."/>
            <person name="Morrow B.E."/>
            <person name="Edelmann L."/>
            <person name="Kim U.J."/>
            <person name="Shizuya H."/>
            <person name="Simon M.I."/>
            <person name="Dumanski J.P."/>
            <person name="Peyrard M."/>
            <person name="Kedra D."/>
            <person name="Seroussi E."/>
            <person name="Fransson I."/>
            <person name="Tapia I."/>
            <person name="Bruder C.E."/>
            <person name="O'Brien K.P."/>
            <person name="Wilkinson P."/>
            <person name="Bodenteich A."/>
            <person name="Hartman K."/>
            <person name="Hu X."/>
            <person name="Khan A.S."/>
            <person name="Lane L."/>
            <person name="Tilahun Y."/>
            <person name="Wright H."/>
        </authorList>
    </citation>
    <scope>NUCLEOTIDE SEQUENCE [LARGE SCALE GENOMIC DNA]</scope>
</reference>
<reference key="6">
    <citation type="journal article" date="2004" name="Genome Res.">
        <title>The status, quality, and expansion of the NIH full-length cDNA project: the Mammalian Gene Collection (MGC).</title>
        <authorList>
            <consortium name="The MGC Project Team"/>
        </authorList>
    </citation>
    <scope>NUCLEOTIDE SEQUENCE [LARGE SCALE MRNA] (ISOFORM 1)</scope>
    <source>
        <tissue>Placenta</tissue>
    </source>
</reference>
<reference key="7">
    <citation type="journal article" date="2002" name="Science">
        <title>A complex with chromatin modifiers that occupies E2F- and Myc-responsive genes in G0 cells.</title>
        <authorList>
            <person name="Ogawa H."/>
            <person name="Ishiguro K."/>
            <person name="Gaubatz S."/>
            <person name="Livingston D.M."/>
            <person name="Nakatani Y."/>
        </authorList>
    </citation>
    <scope>IDENTIFICATION OF COMPLEX WITH E2F6; TFDP1; MAX; MGA; EUHMTASE1; CBX3; RING1; RNF2; MBLR; BAT8 AND YAF2</scope>
</reference>
<reference key="8">
    <citation type="journal article" date="2008" name="Proc. Natl. Acad. Sci. U.S.A.">
        <title>A quantitative atlas of mitotic phosphorylation.</title>
        <authorList>
            <person name="Dephoure N."/>
            <person name="Zhou C."/>
            <person name="Villen J."/>
            <person name="Beausoleil S.A."/>
            <person name="Bakalarski C.E."/>
            <person name="Elledge S.J."/>
            <person name="Gygi S.P."/>
        </authorList>
    </citation>
    <scope>PHOSPHORYLATION [LARGE SCALE ANALYSIS] AT SER-13; SER-683; SER-688 AND SER-689</scope>
    <scope>IDENTIFICATION BY MASS SPECTROMETRY [LARGE SCALE ANALYSIS]</scope>
    <source>
        <tissue>Cervix carcinoma</tissue>
    </source>
</reference>
<reference key="9">
    <citation type="journal article" date="2009" name="Anal. Chem.">
        <title>Lys-N and trypsin cover complementary parts of the phosphoproteome in a refined SCX-based approach.</title>
        <authorList>
            <person name="Gauci S."/>
            <person name="Helbig A.O."/>
            <person name="Slijper M."/>
            <person name="Krijgsveld J."/>
            <person name="Heck A.J."/>
            <person name="Mohammed S."/>
        </authorList>
    </citation>
    <scope>IDENTIFICATION BY MASS SPECTROMETRY [LARGE SCALE ANALYSIS]</scope>
</reference>
<reference key="10">
    <citation type="journal article" date="2010" name="Sci. Signal.">
        <title>Quantitative phosphoproteomics reveals widespread full phosphorylation site occupancy during mitosis.</title>
        <authorList>
            <person name="Olsen J.V."/>
            <person name="Vermeulen M."/>
            <person name="Santamaria A."/>
            <person name="Kumar C."/>
            <person name="Miller M.L."/>
            <person name="Jensen L.J."/>
            <person name="Gnad F."/>
            <person name="Cox J."/>
            <person name="Jensen T.S."/>
            <person name="Nigg E.A."/>
            <person name="Brunak S."/>
            <person name="Mann M."/>
        </authorList>
    </citation>
    <scope>IDENTIFICATION BY MASS SPECTROMETRY [LARGE SCALE ANALYSIS]</scope>
    <source>
        <tissue>Cervix carcinoma</tissue>
    </source>
</reference>
<reference key="11">
    <citation type="journal article" date="2011" name="Sci. Signal.">
        <title>System-wide temporal characterization of the proteome and phosphoproteome of human embryonic stem cell differentiation.</title>
        <authorList>
            <person name="Rigbolt K.T."/>
            <person name="Prokhorova T.A."/>
            <person name="Akimov V."/>
            <person name="Henningsen J."/>
            <person name="Johansen P.T."/>
            <person name="Kratchmarova I."/>
            <person name="Kassem M."/>
            <person name="Mann M."/>
            <person name="Olsen J.V."/>
            <person name="Blagoev B."/>
        </authorList>
    </citation>
    <scope>PHOSPHORYLATION [LARGE SCALE ANALYSIS] AT SER-338</scope>
    <scope>IDENTIFICATION BY MASS SPECTROMETRY [LARGE SCALE ANALYSIS]</scope>
</reference>
<reference key="12">
    <citation type="journal article" date="2013" name="J. Proteome Res.">
        <title>Toward a comprehensive characterization of a human cancer cell phosphoproteome.</title>
        <authorList>
            <person name="Zhou H."/>
            <person name="Di Palma S."/>
            <person name="Preisinger C."/>
            <person name="Peng M."/>
            <person name="Polat A.N."/>
            <person name="Heck A.J."/>
            <person name="Mohammed S."/>
        </authorList>
    </citation>
    <scope>PHOSPHORYLATION [LARGE SCALE ANALYSIS] AT SER-67; THR-76 AND SER-689</scope>
    <scope>IDENTIFICATION BY MASS SPECTROMETRY [LARGE SCALE ANALYSIS]</scope>
    <source>
        <tissue>Cervix carcinoma</tissue>
        <tissue>Erythroleukemia</tissue>
    </source>
</reference>
<reference key="13">
    <citation type="journal article" date="2014" name="Nat. Struct. Mol. Biol.">
        <title>Uncovering global SUMOylation signaling networks in a site-specific manner.</title>
        <authorList>
            <person name="Hendriks I.A."/>
            <person name="D'Souza R.C."/>
            <person name="Yang B."/>
            <person name="Verlaan-de Vries M."/>
            <person name="Mann M."/>
            <person name="Vertegaal A.C."/>
        </authorList>
    </citation>
    <scope>SUMOYLATION [LARGE SCALE ANALYSIS] AT LYS-675 AND LYS-700</scope>
    <scope>IDENTIFICATION BY MASS SPECTROMETRY [LARGE SCALE ANALYSIS]</scope>
</reference>
<reference key="14">
    <citation type="journal article" date="2014" name="Proc. Natl. Acad. Sci. U.S.A.">
        <title>Mapping of SUMO sites and analysis of SUMOylation changes induced by external stimuli.</title>
        <authorList>
            <person name="Impens F."/>
            <person name="Radoshevich L."/>
            <person name="Cossart P."/>
            <person name="Ribet D."/>
        </authorList>
    </citation>
    <scope>SUMOYLATION [LARGE SCALE ANALYSIS] AT LYS-700</scope>
    <scope>IDENTIFICATION BY MASS SPECTROMETRY [LARGE SCALE ANALYSIS]</scope>
</reference>
<reference key="15">
    <citation type="journal article" date="2015" name="Cell Rep.">
        <title>SUMO-2 orchestrates chromatin modifiers in response to DNA damage.</title>
        <authorList>
            <person name="Hendriks I.A."/>
            <person name="Treffers L.W."/>
            <person name="Verlaan-de Vries M."/>
            <person name="Olsen J.V."/>
            <person name="Vertegaal A.C."/>
        </authorList>
    </citation>
    <scope>SUMOYLATION [LARGE SCALE ANALYSIS] AT LYS-675</scope>
    <scope>IDENTIFICATION BY MASS SPECTROMETRY [LARGE SCALE ANALYSIS]</scope>
</reference>
<reference key="16">
    <citation type="journal article" date="2015" name="Mol. Cell. Proteomics">
        <title>System-wide analysis of SUMOylation dynamics in response to replication stress reveals novel small ubiquitin-like modified target proteins and acceptor lysines relevant for genome stability.</title>
        <authorList>
            <person name="Xiao Z."/>
            <person name="Chang J.G."/>
            <person name="Hendriks I.A."/>
            <person name="Sigurdsson J.O."/>
            <person name="Olsen J.V."/>
            <person name="Vertegaal A.C."/>
        </authorList>
    </citation>
    <scope>SUMOYLATION [LARGE SCALE ANALYSIS] AT LYS-675</scope>
    <scope>IDENTIFICATION BY MASS SPECTROMETRY [LARGE SCALE ANALYSIS]</scope>
</reference>
<reference key="17">
    <citation type="journal article" date="2017" name="Nat. Struct. Mol. Biol.">
        <title>Site-specific mapping of the human SUMO proteome reveals co-modification with phosphorylation.</title>
        <authorList>
            <person name="Hendriks I.A."/>
            <person name="Lyon D."/>
            <person name="Young C."/>
            <person name="Jensen L.J."/>
            <person name="Vertegaal A.C."/>
            <person name="Nielsen M.L."/>
        </authorList>
    </citation>
    <scope>SUMOYLATION [LARGE SCALE ANALYSIS] AT LYS-405; LYS-647; LYS-659; LYS-675 AND LYS-700</scope>
    <scope>IDENTIFICATION BY MASS SPECTROMETRY [LARGE SCALE ANALYSIS]</scope>
</reference>
<reference key="18">
    <citation type="journal article" date="2009" name="Nucleic Acids Res.">
        <title>Methylation-state-specific recognition of histones by the MBT repeat protein L3MBTL2.</title>
        <authorList>
            <person name="Guo Y."/>
            <person name="Nady N."/>
            <person name="Qi C."/>
            <person name="Allali-Hassani A."/>
            <person name="Zhu H."/>
            <person name="Pan P."/>
            <person name="Adams-Cioaba M.A."/>
            <person name="Amaya M.F."/>
            <person name="Dong A."/>
            <person name="Vedadi M."/>
            <person name="Schapira M."/>
            <person name="Read R.J."/>
            <person name="Arrowsmith C.H."/>
            <person name="Min J."/>
        </authorList>
    </citation>
    <scope>X-RAY CRYSTALLOGRAPHY (2.1 ANGSTROMS) OF 170-625 IN COMPLEX WITH MONOMETHYLATED HISTONE H4 PEPTIDE</scope>
    <scope>FUNCTION</scope>
</reference>
<reference key="19">
    <citation type="journal article" date="2009" name="Protein Sci.">
        <title>Solution structure of the FCS zinc finger domain of the human polycomb group protein L(3)mbt-like 2.</title>
        <authorList>
            <person name="Lechtenberg B.C."/>
            <person name="Allen M.D."/>
            <person name="Rutherford T.J."/>
            <person name="Freund S.M."/>
            <person name="Bycroft M."/>
        </authorList>
    </citation>
    <scope>STRUCTURE BY NMR OF 82-124 IN COMPLEX WITH ZINC IONS</scope>
</reference>
<name>LMBL2_HUMAN</name>
<keyword id="KW-0002">3D-structure</keyword>
<keyword id="KW-0025">Alternative splicing</keyword>
<keyword id="KW-0156">Chromatin regulator</keyword>
<keyword id="KW-1017">Isopeptide bond</keyword>
<keyword id="KW-0479">Metal-binding</keyword>
<keyword id="KW-0539">Nucleus</keyword>
<keyword id="KW-0597">Phosphoprotein</keyword>
<keyword id="KW-1267">Proteomics identification</keyword>
<keyword id="KW-1185">Reference proteome</keyword>
<keyword id="KW-0677">Repeat</keyword>
<keyword id="KW-0804">Transcription</keyword>
<keyword id="KW-0805">Transcription regulation</keyword>
<keyword id="KW-0832">Ubl conjugation</keyword>
<keyword id="KW-0862">Zinc</keyword>
<keyword id="KW-0863">Zinc-finger</keyword>
<feature type="chain" id="PRO_0000084448" description="Lethal(3)malignant brain tumor-like protein 2">
    <location>
        <begin position="1"/>
        <end position="705"/>
    </location>
</feature>
<feature type="repeat" description="MBT 1">
    <location>
        <begin position="179"/>
        <end position="283"/>
    </location>
</feature>
<feature type="repeat" description="MBT 2">
    <location>
        <begin position="291"/>
        <end position="391"/>
    </location>
</feature>
<feature type="repeat" description="MBT 3">
    <location>
        <begin position="397"/>
        <end position="500"/>
    </location>
</feature>
<feature type="repeat" description="MBT 4">
    <location>
        <begin position="508"/>
        <end position="604"/>
    </location>
</feature>
<feature type="zinc finger region" description="FCS-type" evidence="1">
    <location>
        <begin position="81"/>
        <end position="116"/>
    </location>
</feature>
<feature type="region of interest" description="Disordered" evidence="2">
    <location>
        <begin position="1"/>
        <end position="84"/>
    </location>
</feature>
<feature type="region of interest" description="Disordered" evidence="2">
    <location>
        <begin position="608"/>
        <end position="665"/>
    </location>
</feature>
<feature type="region of interest" description="Disordered" evidence="2">
    <location>
        <begin position="680"/>
        <end position="705"/>
    </location>
</feature>
<feature type="compositionally biased region" description="Acidic residues" evidence="2">
    <location>
        <begin position="15"/>
        <end position="25"/>
    </location>
</feature>
<feature type="compositionally biased region" description="Low complexity" evidence="2">
    <location>
        <begin position="38"/>
        <end position="49"/>
    </location>
</feature>
<feature type="compositionally biased region" description="Acidic residues" evidence="2">
    <location>
        <begin position="50"/>
        <end position="60"/>
    </location>
</feature>
<feature type="compositionally biased region" description="Basic residues" evidence="2">
    <location>
        <begin position="619"/>
        <end position="634"/>
    </location>
</feature>
<feature type="binding site" evidence="1">
    <location>
        <position position="90"/>
    </location>
    <ligand>
        <name>Zn(2+)</name>
        <dbReference type="ChEBI" id="CHEBI:29105"/>
    </ligand>
</feature>
<feature type="binding site" evidence="1">
    <location>
        <position position="93"/>
    </location>
    <ligand>
        <name>Zn(2+)</name>
        <dbReference type="ChEBI" id="CHEBI:29105"/>
    </ligand>
</feature>
<feature type="binding site" evidence="1">
    <location>
        <position position="110"/>
    </location>
    <ligand>
        <name>Zn(2+)</name>
        <dbReference type="ChEBI" id="CHEBI:29105"/>
    </ligand>
</feature>
<feature type="binding site" evidence="1">
    <location>
        <position position="114"/>
    </location>
    <ligand>
        <name>Zn(2+)</name>
        <dbReference type="ChEBI" id="CHEBI:29105"/>
    </ligand>
</feature>
<feature type="modified residue" description="Phosphoserine" evidence="8">
    <location>
        <position position="13"/>
    </location>
</feature>
<feature type="modified residue" description="Phosphoserine" evidence="10">
    <location>
        <position position="67"/>
    </location>
</feature>
<feature type="modified residue" description="Phosphothreonine" evidence="10">
    <location>
        <position position="76"/>
    </location>
</feature>
<feature type="modified residue" description="Phosphoserine" evidence="9">
    <location>
        <position position="338"/>
    </location>
</feature>
<feature type="modified residue" description="Phosphoserine" evidence="8">
    <location>
        <position position="683"/>
    </location>
</feature>
<feature type="modified residue" description="Phosphoserine" evidence="8">
    <location>
        <position position="688"/>
    </location>
</feature>
<feature type="modified residue" description="Phosphoserine" evidence="8 10">
    <location>
        <position position="689"/>
    </location>
</feature>
<feature type="cross-link" description="Glycyl lysine isopeptide (Lys-Gly) (interchain with G-Cter in SUMO2)" evidence="15">
    <location>
        <position position="405"/>
    </location>
</feature>
<feature type="cross-link" description="Glycyl lysine isopeptide (Lys-Gly) (interchain with G-Cter in SUMO2)" evidence="15">
    <location>
        <position position="647"/>
    </location>
</feature>
<feature type="cross-link" description="Glycyl lysine isopeptide (Lys-Gly) (interchain with G-Cter in SUMO2)" evidence="15">
    <location>
        <position position="659"/>
    </location>
</feature>
<feature type="cross-link" description="Glycyl lysine isopeptide (Lys-Gly) (interchain with G-Cter in SUMO2)" evidence="12 13 14 15">
    <location>
        <position position="675"/>
    </location>
</feature>
<feature type="cross-link" description="Glycyl lysine isopeptide (Lys-Gly) (interchain with G-Cter in SUMO1); alternate" evidence="11">
    <location>
        <position position="700"/>
    </location>
</feature>
<feature type="cross-link" description="Glycyl lysine isopeptide (Lys-Gly) (interchain with G-Cter in SUMO2); alternate" evidence="12 15">
    <location>
        <position position="700"/>
    </location>
</feature>
<feature type="splice variant" id="VSP_003906" description="In isoform 3." evidence="6">
    <original>EPATPLKAKE</original>
    <variation>GVGSRGPKRL</variation>
    <location>
        <begin position="608"/>
        <end position="617"/>
    </location>
</feature>
<feature type="splice variant" id="VSP_003904" description="In isoform 2." evidence="5">
    <original>EPATPLK</original>
    <variation>GKLPRSL</variation>
    <location>
        <begin position="608"/>
        <end position="614"/>
    </location>
</feature>
<feature type="splice variant" id="VSP_003905" description="In isoform 2." evidence="5">
    <location>
        <begin position="615"/>
        <end position="705"/>
    </location>
</feature>
<feature type="splice variant" id="VSP_003907" description="In isoform 3." evidence="6">
    <location>
        <begin position="618"/>
        <end position="705"/>
    </location>
</feature>
<feature type="sequence variant" id="VAR_033998" description="In dbSNP:rs3804097.">
    <original>I</original>
    <variation>V</variation>
    <location>
        <position position="7"/>
    </location>
</feature>
<feature type="sequence variant" id="VAR_015093" description="In dbSNP:rs2277846.">
    <original>R</original>
    <variation>W</variation>
    <location>
        <position position="300"/>
    </location>
</feature>
<feature type="sequence variant" id="VAR_061675" description="In dbSNP:rs34289721.">
    <original>V</original>
    <variation>A</variation>
    <location>
        <position position="337"/>
    </location>
</feature>
<feature type="strand" evidence="16">
    <location>
        <begin position="87"/>
        <end position="89"/>
    </location>
</feature>
<feature type="turn" evidence="16">
    <location>
        <begin position="91"/>
        <end position="93"/>
    </location>
</feature>
<feature type="strand" evidence="16">
    <location>
        <begin position="96"/>
        <end position="98"/>
    </location>
</feature>
<feature type="turn" evidence="16">
    <location>
        <begin position="99"/>
        <end position="101"/>
    </location>
</feature>
<feature type="turn" evidence="16">
    <location>
        <begin position="104"/>
        <end position="106"/>
    </location>
</feature>
<feature type="strand" evidence="16">
    <location>
        <begin position="107"/>
        <end position="111"/>
    </location>
</feature>
<feature type="helix" evidence="16">
    <location>
        <begin position="112"/>
        <end position="120"/>
    </location>
</feature>
<feature type="helix" evidence="18">
    <location>
        <begin position="181"/>
        <end position="188"/>
    </location>
</feature>
<feature type="helix" evidence="18">
    <location>
        <begin position="195"/>
        <end position="197"/>
    </location>
</feature>
<feature type="helix" evidence="18">
    <location>
        <begin position="204"/>
        <end position="209"/>
    </location>
</feature>
<feature type="strand" evidence="18">
    <location>
        <begin position="215"/>
        <end position="219"/>
    </location>
</feature>
<feature type="strand" evidence="18">
    <location>
        <begin position="230"/>
        <end position="239"/>
    </location>
</feature>
<feature type="strand" evidence="18">
    <location>
        <begin position="242"/>
        <end position="247"/>
    </location>
</feature>
<feature type="strand" evidence="18">
    <location>
        <begin position="258"/>
        <end position="261"/>
    </location>
</feature>
<feature type="helix" evidence="18">
    <location>
        <begin position="272"/>
        <end position="275"/>
    </location>
</feature>
<feature type="turn" evidence="18">
    <location>
        <begin position="284"/>
        <end position="286"/>
    </location>
</feature>
<feature type="helix" evidence="18">
    <location>
        <begin position="287"/>
        <end position="289"/>
    </location>
</feature>
<feature type="helix" evidence="18">
    <location>
        <begin position="293"/>
        <end position="301"/>
    </location>
</feature>
<feature type="helix" evidence="18">
    <location>
        <begin position="311"/>
        <end position="318"/>
    </location>
</feature>
<feature type="strand" evidence="18">
    <location>
        <begin position="328"/>
        <end position="332"/>
    </location>
</feature>
<feature type="strand" evidence="18">
    <location>
        <begin position="340"/>
        <end position="349"/>
    </location>
</feature>
<feature type="strand" evidence="18">
    <location>
        <begin position="352"/>
        <end position="357"/>
    </location>
</feature>
<feature type="strand" evidence="18">
    <location>
        <begin position="366"/>
        <end position="369"/>
    </location>
</feature>
<feature type="strand" evidence="18">
    <location>
        <begin position="375"/>
        <end position="377"/>
    </location>
</feature>
<feature type="helix" evidence="18">
    <location>
        <begin position="380"/>
        <end position="384"/>
    </location>
</feature>
<feature type="strand" evidence="18">
    <location>
        <begin position="387"/>
        <end position="389"/>
    </location>
</feature>
<feature type="helix" evidence="18">
    <location>
        <begin position="412"/>
        <end position="414"/>
    </location>
</feature>
<feature type="strand" evidence="18">
    <location>
        <begin position="420"/>
        <end position="422"/>
    </location>
</feature>
<feature type="strand" evidence="18">
    <location>
        <begin position="433"/>
        <end position="438"/>
    </location>
</feature>
<feature type="strand" evidence="18">
    <location>
        <begin position="441"/>
        <end position="453"/>
    </location>
</feature>
<feature type="helix" evidence="17">
    <location>
        <begin position="455"/>
        <end position="457"/>
    </location>
</feature>
<feature type="strand" evidence="18">
    <location>
        <begin position="458"/>
        <end position="463"/>
    </location>
</feature>
<feature type="strand" evidence="18">
    <location>
        <begin position="475"/>
        <end position="478"/>
    </location>
</feature>
<feature type="strand" evidence="17">
    <location>
        <begin position="482"/>
        <end position="486"/>
    </location>
</feature>
<feature type="helix" evidence="18">
    <location>
        <begin position="489"/>
        <end position="492"/>
    </location>
</feature>
<feature type="strand" evidence="18">
    <location>
        <begin position="505"/>
        <end position="507"/>
    </location>
</feature>
<feature type="helix" evidence="18">
    <location>
        <begin position="510"/>
        <end position="517"/>
    </location>
</feature>
<feature type="helix" evidence="18">
    <location>
        <begin position="524"/>
        <end position="526"/>
    </location>
</feature>
<feature type="strand" evidence="18">
    <location>
        <begin position="541"/>
        <end position="545"/>
    </location>
</feature>
<feature type="strand" evidence="18">
    <location>
        <begin position="553"/>
        <end position="562"/>
    </location>
</feature>
<feature type="strand" evidence="18">
    <location>
        <begin position="565"/>
        <end position="570"/>
    </location>
</feature>
<feature type="helix" evidence="18">
    <location>
        <begin position="575"/>
        <end position="577"/>
    </location>
</feature>
<feature type="strand" evidence="18">
    <location>
        <begin position="579"/>
        <end position="582"/>
    </location>
</feature>
<feature type="helix" evidence="18">
    <location>
        <begin position="593"/>
        <end position="597"/>
    </location>
</feature>
<feature type="strand" evidence="18">
    <location>
        <begin position="604"/>
        <end position="607"/>
    </location>
</feature>
<sequence length="705" mass="79110">MEKPRSIEETPSSEPMEEEEDDDLELFGGYDSFRSYNSSVGSESSSYLEESSEAENEDREAGELPTSPLHLLSPGTPRSLDGSGSEPAVCEMCGIVGTREAFFSKTKRFCSVSCSRSYSSNSKKASILARLQGKPPTKKAKVLHKAAWSAKIGAFLHSQGTGQLADGTPTGQDALVLGFDWGKFLKDHSYKAAPVSCFKHVPLYDQWEDVMKGMKVEVLNSDAVLPSRVYWIASVIQTAGYRVLLRYEGFENDASHDFWCNLGTVDVHPIGWCAINSKILVPPRTIHAKFTDWKGYLMKRLVGSRTLPVDFHIKMVESMKYPFRQGMRLEVVDKSQVSRTRMAVVDTVIGGRLRLLYEDGDSDDDFWCHMWSPLIHPVGWSRRVGHGIKMSERRSDMAHHPTFRKIYCDAVPYLFKKVRAVYTEGGWFEEGMKLEAIDPLNLGNICVATVCKVLLDGYLMICVDGGPSTDGLDWFCYHASSHAIFPATFCQKNDIELTPPKGYEAQTFNWENYLEKTKSKAAPSRLFNMDCPNHGFKVGMKLEAVDLMEPRLICVATVKRVVHRLLSIHFDGWDSEYDQWVDCESPDIYPVGWCELTGYQLQPPVAAEPATPLKAKEATKKKKKQFGKKRKRIPPTKTRPLRQGSKKPLLEDDPQGARKISSEPVPGEIIAVRVKEEHLDVASPDKASSPELPVSVENIKQETDD</sequence>